<keyword id="KW-0028">Amino-acid biosynthesis</keyword>
<keyword id="KW-0057">Aromatic amino acid biosynthesis</keyword>
<keyword id="KW-0170">Cobalt</keyword>
<keyword id="KW-0963">Cytoplasm</keyword>
<keyword id="KW-0456">Lyase</keyword>
<keyword id="KW-0479">Metal-binding</keyword>
<keyword id="KW-0520">NAD</keyword>
<keyword id="KW-0547">Nucleotide-binding</keyword>
<keyword id="KW-0862">Zinc</keyword>
<proteinExistence type="inferred from homology"/>
<dbReference type="EC" id="4.2.3.4" evidence="1"/>
<dbReference type="EMBL" id="BX251411">
    <property type="protein sequence ID" value="CAD67070.1"/>
    <property type="molecule type" value="Genomic_DNA"/>
</dbReference>
<dbReference type="SMR" id="Q83HU4"/>
<dbReference type="KEGG" id="tws:TW399"/>
<dbReference type="HOGENOM" id="CLU_001201_0_1_11"/>
<dbReference type="UniPathway" id="UPA00053">
    <property type="reaction ID" value="UER00085"/>
</dbReference>
<dbReference type="GO" id="GO:0005737">
    <property type="term" value="C:cytoplasm"/>
    <property type="evidence" value="ECO:0007669"/>
    <property type="project" value="UniProtKB-SubCell"/>
</dbReference>
<dbReference type="GO" id="GO:0003856">
    <property type="term" value="F:3-dehydroquinate synthase activity"/>
    <property type="evidence" value="ECO:0007669"/>
    <property type="project" value="UniProtKB-UniRule"/>
</dbReference>
<dbReference type="GO" id="GO:0046872">
    <property type="term" value="F:metal ion binding"/>
    <property type="evidence" value="ECO:0007669"/>
    <property type="project" value="UniProtKB-KW"/>
</dbReference>
<dbReference type="GO" id="GO:0000166">
    <property type="term" value="F:nucleotide binding"/>
    <property type="evidence" value="ECO:0007669"/>
    <property type="project" value="UniProtKB-KW"/>
</dbReference>
<dbReference type="GO" id="GO:0008652">
    <property type="term" value="P:amino acid biosynthetic process"/>
    <property type="evidence" value="ECO:0007669"/>
    <property type="project" value="UniProtKB-KW"/>
</dbReference>
<dbReference type="GO" id="GO:0009073">
    <property type="term" value="P:aromatic amino acid family biosynthetic process"/>
    <property type="evidence" value="ECO:0007669"/>
    <property type="project" value="UniProtKB-KW"/>
</dbReference>
<dbReference type="GO" id="GO:0009423">
    <property type="term" value="P:chorismate biosynthetic process"/>
    <property type="evidence" value="ECO:0007669"/>
    <property type="project" value="UniProtKB-UniRule"/>
</dbReference>
<dbReference type="CDD" id="cd08195">
    <property type="entry name" value="DHQS"/>
    <property type="match status" value="1"/>
</dbReference>
<dbReference type="Gene3D" id="3.40.50.1970">
    <property type="match status" value="1"/>
</dbReference>
<dbReference type="Gene3D" id="1.20.1090.10">
    <property type="entry name" value="Dehydroquinate synthase-like - alpha domain"/>
    <property type="match status" value="1"/>
</dbReference>
<dbReference type="HAMAP" id="MF_00110">
    <property type="entry name" value="DHQ_synthase"/>
    <property type="match status" value="1"/>
</dbReference>
<dbReference type="InterPro" id="IPR050071">
    <property type="entry name" value="Dehydroquinate_synthase"/>
</dbReference>
<dbReference type="InterPro" id="IPR016037">
    <property type="entry name" value="DHQ_synth_AroB"/>
</dbReference>
<dbReference type="InterPro" id="IPR030963">
    <property type="entry name" value="DHQ_synth_fam"/>
</dbReference>
<dbReference type="InterPro" id="IPR030960">
    <property type="entry name" value="DHQS/DOIS_N"/>
</dbReference>
<dbReference type="InterPro" id="IPR056179">
    <property type="entry name" value="DHQS_C"/>
</dbReference>
<dbReference type="NCBIfam" id="TIGR01357">
    <property type="entry name" value="aroB"/>
    <property type="match status" value="1"/>
</dbReference>
<dbReference type="PANTHER" id="PTHR43622">
    <property type="entry name" value="3-DEHYDROQUINATE SYNTHASE"/>
    <property type="match status" value="1"/>
</dbReference>
<dbReference type="PANTHER" id="PTHR43622:SF7">
    <property type="entry name" value="3-DEHYDROQUINATE SYNTHASE, CHLOROPLASTIC"/>
    <property type="match status" value="1"/>
</dbReference>
<dbReference type="Pfam" id="PF01761">
    <property type="entry name" value="DHQ_synthase"/>
    <property type="match status" value="1"/>
</dbReference>
<dbReference type="Pfam" id="PF24621">
    <property type="entry name" value="DHQS_C"/>
    <property type="match status" value="1"/>
</dbReference>
<dbReference type="PIRSF" id="PIRSF001455">
    <property type="entry name" value="DHQ_synth"/>
    <property type="match status" value="1"/>
</dbReference>
<dbReference type="SUPFAM" id="SSF56796">
    <property type="entry name" value="Dehydroquinate synthase-like"/>
    <property type="match status" value="1"/>
</dbReference>
<organism>
    <name type="scientific">Tropheryma whipplei (strain TW08/27)</name>
    <name type="common">Whipple's bacillus</name>
    <dbReference type="NCBI Taxonomy" id="218496"/>
    <lineage>
        <taxon>Bacteria</taxon>
        <taxon>Bacillati</taxon>
        <taxon>Actinomycetota</taxon>
        <taxon>Actinomycetes</taxon>
        <taxon>Micrococcales</taxon>
        <taxon>Tropherymataceae</taxon>
        <taxon>Tropheryma</taxon>
    </lineage>
</organism>
<protein>
    <recommendedName>
        <fullName evidence="1">3-dehydroquinate synthase</fullName>
        <shortName evidence="1">DHQS</shortName>
        <ecNumber evidence="1">4.2.3.4</ecNumber>
    </recommendedName>
</protein>
<feature type="chain" id="PRO_0000140802" description="3-dehydroquinate synthase">
    <location>
        <begin position="1"/>
        <end position="380"/>
    </location>
</feature>
<feature type="binding site" evidence="1">
    <location>
        <begin position="100"/>
        <end position="104"/>
    </location>
    <ligand>
        <name>NAD(+)</name>
        <dbReference type="ChEBI" id="CHEBI:57540"/>
    </ligand>
</feature>
<feature type="binding site" evidence="1">
    <location>
        <begin position="124"/>
        <end position="125"/>
    </location>
    <ligand>
        <name>NAD(+)</name>
        <dbReference type="ChEBI" id="CHEBI:57540"/>
    </ligand>
</feature>
<feature type="binding site" evidence="1">
    <location>
        <position position="137"/>
    </location>
    <ligand>
        <name>NAD(+)</name>
        <dbReference type="ChEBI" id="CHEBI:57540"/>
    </ligand>
</feature>
<feature type="binding site" evidence="1">
    <location>
        <position position="146"/>
    </location>
    <ligand>
        <name>NAD(+)</name>
        <dbReference type="ChEBI" id="CHEBI:57540"/>
    </ligand>
</feature>
<feature type="binding site" evidence="1">
    <location>
        <position position="179"/>
    </location>
    <ligand>
        <name>Zn(2+)</name>
        <dbReference type="ChEBI" id="CHEBI:29105"/>
    </ligand>
</feature>
<feature type="binding site" evidence="1">
    <location>
        <position position="251"/>
    </location>
    <ligand>
        <name>Zn(2+)</name>
        <dbReference type="ChEBI" id="CHEBI:29105"/>
    </ligand>
</feature>
<feature type="binding site" evidence="1">
    <location>
        <position position="267"/>
    </location>
    <ligand>
        <name>Zn(2+)</name>
        <dbReference type="ChEBI" id="CHEBI:29105"/>
    </ligand>
</feature>
<evidence type="ECO:0000255" key="1">
    <source>
        <dbReference type="HAMAP-Rule" id="MF_00110"/>
    </source>
</evidence>
<sequence>MMKKYSLTTHSTETCQILFTSVSNVFKYIPSGTRRILIMYQDSVSQVLPIFSAASGVQCYRYLIPDSESAKQLGVAEQCWRFLAQNNFTRSDLIVSCGGGAASDLSGFVASSYLRGIKIIHIPTTLIGMVDAAIGGKTGINLKEGKNLVGSFYSPYIVLCDPSMLTTLNEEHLKSGLAEIIKCGFIQDESILSILEHNAQDHMDCSQRVCAETLPPKLLEELIHKAVSVKITMVDSDFRDTHKRQFLNYGHTLAHALEAATSHKLSHGQAVSIGMVYAAQVAFAKGLIGRNILTRHERILETYGLPVCPPEVQWRNITPYMQRDKKNMQNNDTDSYKDSREIPQISTQSKLVLLRDIANPFITSVSHTVLLEAYEAMFPQ</sequence>
<name>AROB_TROW8</name>
<gene>
    <name evidence="1" type="primary">aroB</name>
    <name type="ordered locus">TW399</name>
</gene>
<comment type="function">
    <text evidence="1">Catalyzes the conversion of 3-deoxy-D-arabino-heptulosonate 7-phosphate (DAHP) to dehydroquinate (DHQ).</text>
</comment>
<comment type="catalytic activity">
    <reaction evidence="1">
        <text>7-phospho-2-dehydro-3-deoxy-D-arabino-heptonate = 3-dehydroquinate + phosphate</text>
        <dbReference type="Rhea" id="RHEA:21968"/>
        <dbReference type="ChEBI" id="CHEBI:32364"/>
        <dbReference type="ChEBI" id="CHEBI:43474"/>
        <dbReference type="ChEBI" id="CHEBI:58394"/>
        <dbReference type="EC" id="4.2.3.4"/>
    </reaction>
</comment>
<comment type="cofactor">
    <cofactor evidence="1">
        <name>NAD(+)</name>
        <dbReference type="ChEBI" id="CHEBI:57540"/>
    </cofactor>
</comment>
<comment type="cofactor">
    <cofactor evidence="1">
        <name>Co(2+)</name>
        <dbReference type="ChEBI" id="CHEBI:48828"/>
    </cofactor>
    <cofactor evidence="1">
        <name>Zn(2+)</name>
        <dbReference type="ChEBI" id="CHEBI:29105"/>
    </cofactor>
    <text evidence="1">Binds 1 divalent metal cation per subunit. Can use either Co(2+) or Zn(2+).</text>
</comment>
<comment type="pathway">
    <text evidence="1">Metabolic intermediate biosynthesis; chorismate biosynthesis; chorismate from D-erythrose 4-phosphate and phosphoenolpyruvate: step 2/7.</text>
</comment>
<comment type="subcellular location">
    <subcellularLocation>
        <location evidence="1">Cytoplasm</location>
    </subcellularLocation>
</comment>
<comment type="similarity">
    <text evidence="1">Belongs to the sugar phosphate cyclases superfamily. Dehydroquinate synthase family.</text>
</comment>
<accession>Q83HU4</accession>
<reference key="1">
    <citation type="journal article" date="2003" name="Lancet">
        <title>Sequencing and analysis of the genome of the Whipple's disease bacterium Tropheryma whipplei.</title>
        <authorList>
            <person name="Bentley S.D."/>
            <person name="Maiwald M."/>
            <person name="Murphy L.D."/>
            <person name="Pallen M.J."/>
            <person name="Yeats C.A."/>
            <person name="Dover L.G."/>
            <person name="Norbertczak H.T."/>
            <person name="Besra G.S."/>
            <person name="Quail M.A."/>
            <person name="Harris D.E."/>
            <person name="von Herbay A."/>
            <person name="Goble A."/>
            <person name="Rutter S."/>
            <person name="Squares R."/>
            <person name="Squares S."/>
            <person name="Barrell B.G."/>
            <person name="Parkhill J."/>
            <person name="Relman D.A."/>
        </authorList>
    </citation>
    <scope>NUCLEOTIDE SEQUENCE [LARGE SCALE GENOMIC DNA]</scope>
    <source>
        <strain>TW08/27</strain>
    </source>
</reference>